<comment type="function">
    <text evidence="4 5 6">Sequentially removes both fatty acyl groups from diacylglycerophospholipids and therefore has both phospholipase B and lysophospholipase activities. It also displays transacylase activity. Substrate preference is phosphatidylserine &gt; phosphatidylinositol &gt;&gt; phosphatidylcholine &gt; phosphatidylethanolamine (PubMed:10497163, PubMed:8051052). The substrate specificity is pH- and ion-dependent. In contrast with activities observed at optimum pH 3.5, the order of substrate preference at pH 5.5 is phosphatidylcholine = phosphatidylethanolamine &gt;&gt; phosphatidylinositol. Degrades predominantly phosphatidylcholine and to some extent phosphatidylinositol in vivo (PubMed:15588231).</text>
</comment>
<comment type="catalytic activity">
    <reaction evidence="4 6">
        <text>a 1-acyl-sn-glycero-3-phosphocholine + H2O = sn-glycerol 3-phosphocholine + a fatty acid + H(+)</text>
        <dbReference type="Rhea" id="RHEA:15177"/>
        <dbReference type="ChEBI" id="CHEBI:15377"/>
        <dbReference type="ChEBI" id="CHEBI:15378"/>
        <dbReference type="ChEBI" id="CHEBI:16870"/>
        <dbReference type="ChEBI" id="CHEBI:28868"/>
        <dbReference type="ChEBI" id="CHEBI:58168"/>
        <dbReference type="EC" id="3.1.1.5"/>
    </reaction>
</comment>
<comment type="catalytic activity">
    <reaction evidence="4">
        <text>a 1-acyl-sn-glycero-3-phospho-(1D-myo-inositol) + H2O = sn-glycero-3-phospho-1D-myo-inositol + a fatty acid + H(+)</text>
        <dbReference type="Rhea" id="RHEA:32987"/>
        <dbReference type="ChEBI" id="CHEBI:15377"/>
        <dbReference type="ChEBI" id="CHEBI:15378"/>
        <dbReference type="ChEBI" id="CHEBI:28868"/>
        <dbReference type="ChEBI" id="CHEBI:58444"/>
        <dbReference type="ChEBI" id="CHEBI:64771"/>
    </reaction>
    <physiologicalReaction direction="left-to-right" evidence="11">
        <dbReference type="Rhea" id="RHEA:32988"/>
    </physiologicalReaction>
</comment>
<comment type="catalytic activity">
    <reaction evidence="4">
        <text>a 1-acyl-sn-glycero-3-phospho-L-serine + H2O = sn-glycero-3-phospho-L-serine + a fatty acid + H(+)</text>
        <dbReference type="Rhea" id="RHEA:32979"/>
        <dbReference type="ChEBI" id="CHEBI:15377"/>
        <dbReference type="ChEBI" id="CHEBI:15378"/>
        <dbReference type="ChEBI" id="CHEBI:28868"/>
        <dbReference type="ChEBI" id="CHEBI:64379"/>
        <dbReference type="ChEBI" id="CHEBI:64765"/>
    </reaction>
    <physiologicalReaction direction="left-to-right" evidence="11">
        <dbReference type="Rhea" id="RHEA:32980"/>
    </physiologicalReaction>
</comment>
<comment type="catalytic activity">
    <reaction evidence="4 5">
        <text>a 1,2-diacyl-sn-glycero-3-phospho-(1D-myo-inositol) + 2 H2O = sn-glycero-3-phospho-1D-myo-inositol + 2 a carboxylate + 2 H(+)</text>
        <dbReference type="Rhea" id="RHEA:32983"/>
        <dbReference type="ChEBI" id="CHEBI:15377"/>
        <dbReference type="ChEBI" id="CHEBI:15378"/>
        <dbReference type="ChEBI" id="CHEBI:29067"/>
        <dbReference type="ChEBI" id="CHEBI:57880"/>
        <dbReference type="ChEBI" id="CHEBI:58444"/>
    </reaction>
    <physiologicalReaction direction="left-to-right" evidence="11 12">
        <dbReference type="Rhea" id="RHEA:32984"/>
    </physiologicalReaction>
</comment>
<comment type="catalytic activity">
    <reaction evidence="4 5">
        <text>a 1,2-diacyl-sn-glycero-3-phospho-L-serine + 2 H2O = sn-glycero-3-phospho-L-serine + 2 a carboxylate + 2 H(+)</text>
        <dbReference type="Rhea" id="RHEA:32975"/>
        <dbReference type="ChEBI" id="CHEBI:15377"/>
        <dbReference type="ChEBI" id="CHEBI:15378"/>
        <dbReference type="ChEBI" id="CHEBI:29067"/>
        <dbReference type="ChEBI" id="CHEBI:57262"/>
        <dbReference type="ChEBI" id="CHEBI:64765"/>
    </reaction>
    <physiologicalReaction direction="left-to-right" evidence="11 12">
        <dbReference type="Rhea" id="RHEA:32976"/>
    </physiologicalReaction>
</comment>
<comment type="catalytic activity">
    <reaction evidence="6">
        <text>2 1-hexadecanoyl-sn-glycero-3-phosphocholine = 1,2-dihexadecanoyl-sn-glycero-3-phosphocholine + sn-glycerol 3-phosphocholine</text>
        <dbReference type="Rhea" id="RHEA:40879"/>
        <dbReference type="ChEBI" id="CHEBI:16870"/>
        <dbReference type="ChEBI" id="CHEBI:72998"/>
        <dbReference type="ChEBI" id="CHEBI:72999"/>
    </reaction>
    <physiologicalReaction direction="left-to-right" evidence="13">
        <dbReference type="Rhea" id="RHEA:40880"/>
    </physiologicalReaction>
</comment>
<comment type="catalytic activity">
    <reaction evidence="3 6">
        <text>1-hexadecanoyl-sn-glycero-3-phosphocholine + H2O = sn-glycerol 3-phosphocholine + hexadecanoate + H(+)</text>
        <dbReference type="Rhea" id="RHEA:40435"/>
        <dbReference type="ChEBI" id="CHEBI:7896"/>
        <dbReference type="ChEBI" id="CHEBI:15377"/>
        <dbReference type="ChEBI" id="CHEBI:15378"/>
        <dbReference type="ChEBI" id="CHEBI:16870"/>
        <dbReference type="ChEBI" id="CHEBI:72998"/>
    </reaction>
    <physiologicalReaction direction="left-to-right" evidence="9 13">
        <dbReference type="Rhea" id="RHEA:40436"/>
    </physiologicalReaction>
</comment>
<comment type="catalytic activity">
    <reaction evidence="3 6">
        <text>1,2-dihexadecanoyl-sn-glycero-3-phosphocholine + H2O = 1-hexadecanoyl-sn-glycero-3-phosphocholine + hexadecanoate + H(+)</text>
        <dbReference type="Rhea" id="RHEA:41223"/>
        <dbReference type="ChEBI" id="CHEBI:7896"/>
        <dbReference type="ChEBI" id="CHEBI:15377"/>
        <dbReference type="ChEBI" id="CHEBI:15378"/>
        <dbReference type="ChEBI" id="CHEBI:72998"/>
        <dbReference type="ChEBI" id="CHEBI:72999"/>
    </reaction>
    <physiologicalReaction direction="left-to-right" evidence="9 13">
        <dbReference type="Rhea" id="RHEA:41224"/>
    </physiologicalReaction>
</comment>
<comment type="subcellular location">
    <subcellularLocation>
        <location evidence="10 11">Cell membrane</location>
        <topology evidence="10 11">Lipid-anchor</topology>
        <topology evidence="10 11">GPI-anchor</topology>
    </subcellularLocation>
</comment>
<comment type="similarity">
    <text evidence="8">Belongs to the lysophospholipase family.</text>
</comment>
<organism>
    <name type="scientific">Saccharomyces cerevisiae (strain ATCC 204508 / S288c)</name>
    <name type="common">Baker's yeast</name>
    <dbReference type="NCBI Taxonomy" id="559292"/>
    <lineage>
        <taxon>Eukaryota</taxon>
        <taxon>Fungi</taxon>
        <taxon>Dikarya</taxon>
        <taxon>Ascomycota</taxon>
        <taxon>Saccharomycotina</taxon>
        <taxon>Saccharomycetes</taxon>
        <taxon>Saccharomycetales</taxon>
        <taxon>Saccharomycetaceae</taxon>
        <taxon>Saccharomyces</taxon>
    </lineage>
</organism>
<gene>
    <name evidence="7" type="primary">PLB1</name>
    <name evidence="14" type="ordered locus">YMR008C</name>
    <name evidence="14" type="ORF">YM8270.10C</name>
</gene>
<sequence>MKLQSLLVSAAVLTSLTENVNAWSPNNSYVPANVTCDDDINLVREASGLSDNETEWLKKRDAYTKEALHSFLNRATSNFSDTSLLSTLFGSNSSNMPKIAVACSGGGYRAMLSGAGMLAAMDNRTDGANEHGLGGLLQGATYLAGLSGGNWLTSTLAWNNWTSVQAIVDNTTESNSIWDISHSILTPDGINIFKTGSRWDDISDDVQDKKDAGFNISLADVWGRALAYNFWPSLHRGGVGYTWSTLREADVFKNGEMPFPITVADGRYPGTTVINLNATLFEFNPFEMGSWDPTLNAFTDVKYLGTNVTNGKPVNKGQCIAGFDNTGFITATSSTLFNQFLLRLNSTDLPSFIANLATDFLEDLSDNSDDIAIYAPNPFKEANFLQKNATSSIIESEYLFLVDGGEDNQNIPLVPLLQKERELDVIFALDNSADTDDYWPDGASLVNTYQRQFGSQGLNLSFPYVPDVNTFVNLGLNKKPTFFGCDARNLTDLEYIPPLIVYIPNSRHSFNGNQSTFKMSYSDSERLGMIKNGFEAATMGNFTDDSDFLGCVGCAIIRRKQQNLNATLPSECSQCFTNYCWNGTIDSRSVSGVGNDDYSSSASLSASAAAASASASASASASASASGSSTHKKNAGNALVNYSNLNTNTFIGVLSVISAVFGLI</sequence>
<feature type="signal peptide" evidence="1">
    <location>
        <begin position="1"/>
        <end position="22"/>
    </location>
</feature>
<feature type="chain" id="PRO_0000024646" description="Lysophospholipase 1">
    <location>
        <begin position="23"/>
        <end position="634"/>
    </location>
</feature>
<feature type="propeptide" id="PRO_0000372442" description="Removed in mature form" evidence="1">
    <location>
        <begin position="635"/>
        <end position="664"/>
    </location>
</feature>
<feature type="domain" description="PLA2c" evidence="2">
    <location>
        <begin position="35"/>
        <end position="586"/>
    </location>
</feature>
<feature type="lipid moiety-binding region" description="GPI-anchor amidated asparagine" evidence="1">
    <location>
        <position position="634"/>
    </location>
</feature>
<feature type="glycosylation site" description="N-linked (GlcNAc...) asparagine" evidence="1">
    <location>
        <position position="26"/>
    </location>
</feature>
<feature type="glycosylation site" description="N-linked (GlcNAc...) asparagine" evidence="1">
    <location>
        <position position="33"/>
    </location>
</feature>
<feature type="glycosylation site" description="N-linked (GlcNAc...) asparagine" evidence="1">
    <location>
        <position position="52"/>
    </location>
</feature>
<feature type="glycosylation site" description="N-linked (GlcNAc...) asparagine" evidence="1">
    <location>
        <position position="78"/>
    </location>
</feature>
<feature type="glycosylation site" description="N-linked (GlcNAc...) asparagine" evidence="1">
    <location>
        <position position="92"/>
    </location>
</feature>
<feature type="glycosylation site" description="N-linked (GlcNAc...) asparagine" evidence="1">
    <location>
        <position position="123"/>
    </location>
</feature>
<feature type="glycosylation site" description="N-linked (GlcNAc...) asparagine" evidence="1">
    <location>
        <position position="160"/>
    </location>
</feature>
<feature type="glycosylation site" description="N-linked (GlcNAc...) asparagine" evidence="1">
    <location>
        <position position="170"/>
    </location>
</feature>
<feature type="glycosylation site" description="N-linked (GlcNAc...) asparagine" evidence="1">
    <location>
        <position position="215"/>
    </location>
</feature>
<feature type="glycosylation site" description="N-linked (GlcNAc...) asparagine" evidence="1">
    <location>
        <position position="277"/>
    </location>
</feature>
<feature type="glycosylation site" description="N-linked (GlcNAc...) asparagine" evidence="1">
    <location>
        <position position="307"/>
    </location>
</feature>
<feature type="glycosylation site" description="N-linked (GlcNAc...) asparagine" evidence="1">
    <location>
        <position position="345"/>
    </location>
</feature>
<feature type="glycosylation site" description="N-linked (GlcNAc...) asparagine" evidence="1">
    <location>
        <position position="388"/>
    </location>
</feature>
<feature type="glycosylation site" description="N-linked (GlcNAc...) asparagine" evidence="1">
    <location>
        <position position="459"/>
    </location>
</feature>
<feature type="glycosylation site" description="N-linked (GlcNAc...) asparagine" evidence="1">
    <location>
        <position position="489"/>
    </location>
</feature>
<feature type="glycosylation site" description="N-linked (GlcNAc...) asparagine" evidence="1">
    <location>
        <position position="513"/>
    </location>
</feature>
<feature type="glycosylation site" description="N-linked (GlcNAc...) asparagine" evidence="1">
    <location>
        <position position="541"/>
    </location>
</feature>
<feature type="glycosylation site" description="N-linked (GlcNAc...) asparagine" evidence="1">
    <location>
        <position position="565"/>
    </location>
</feature>
<feature type="glycosylation site" description="N-linked (GlcNAc...) asparagine" evidence="1">
    <location>
        <position position="582"/>
    </location>
</feature>
<feature type="sequence conflict" description="In Ref. 1; AAA61611." evidence="8" ref="1">
    <original>A</original>
    <variation>S</variation>
    <location>
        <position position="32"/>
    </location>
</feature>
<feature type="sequence conflict" description="In Ref. 4; AAT92807." evidence="8" ref="4">
    <original>S</original>
    <variation>P</variation>
    <location>
        <position position="93"/>
    </location>
</feature>
<feature type="sequence conflict" description="In Ref. 1; AAA61611." evidence="8" ref="1">
    <original>E</original>
    <variation>D</variation>
    <location>
        <position position="494"/>
    </location>
</feature>
<keyword id="KW-1003">Cell membrane</keyword>
<keyword id="KW-0325">Glycoprotein</keyword>
<keyword id="KW-0336">GPI-anchor</keyword>
<keyword id="KW-0378">Hydrolase</keyword>
<keyword id="KW-0442">Lipid degradation</keyword>
<keyword id="KW-0443">Lipid metabolism</keyword>
<keyword id="KW-0449">Lipoprotein</keyword>
<keyword id="KW-0472">Membrane</keyword>
<keyword id="KW-1185">Reference proteome</keyword>
<keyword id="KW-0732">Signal</keyword>
<protein>
    <recommendedName>
        <fullName evidence="7">Lysophospholipase 1</fullName>
        <ecNumber evidence="4 6">3.1.1.5</ecNumber>
    </recommendedName>
    <alternativeName>
        <fullName evidence="8">Phospholipase B 1</fullName>
    </alternativeName>
</protein>
<accession>P39105</accession>
<accession>D6VZI2</accession>
<accession>Q6B2E2</accession>
<dbReference type="EC" id="3.1.1.5" evidence="4 6"/>
<dbReference type="EMBL" id="L23089">
    <property type="protein sequence ID" value="AAA61611.1"/>
    <property type="molecule type" value="Genomic_DNA"/>
</dbReference>
<dbReference type="EMBL" id="Z48613">
    <property type="protein sequence ID" value="CAA88523.1"/>
    <property type="molecule type" value="Genomic_DNA"/>
</dbReference>
<dbReference type="EMBL" id="AY692788">
    <property type="protein sequence ID" value="AAT92807.1"/>
    <property type="molecule type" value="Genomic_DNA"/>
</dbReference>
<dbReference type="EMBL" id="BK006946">
    <property type="protein sequence ID" value="DAA09906.1"/>
    <property type="molecule type" value="Genomic_DNA"/>
</dbReference>
<dbReference type="PIR" id="S53037">
    <property type="entry name" value="S53037"/>
</dbReference>
<dbReference type="RefSeq" id="NP_013721.1">
    <property type="nucleotide sequence ID" value="NM_001182504.1"/>
</dbReference>
<dbReference type="SMR" id="P39105"/>
<dbReference type="BioGRID" id="35177">
    <property type="interactions" value="61"/>
</dbReference>
<dbReference type="DIP" id="DIP-2804N"/>
<dbReference type="FunCoup" id="P39105">
    <property type="interactions" value="106"/>
</dbReference>
<dbReference type="IntAct" id="P39105">
    <property type="interactions" value="10"/>
</dbReference>
<dbReference type="MINT" id="P39105"/>
<dbReference type="STRING" id="4932.YMR008C"/>
<dbReference type="SwissLipids" id="SLP:000000078"/>
<dbReference type="GlyCosmos" id="P39105">
    <property type="glycosylation" value="19 sites, No reported glycans"/>
</dbReference>
<dbReference type="GlyGen" id="P39105">
    <property type="glycosylation" value="19 sites"/>
</dbReference>
<dbReference type="iPTMnet" id="P39105"/>
<dbReference type="PaxDb" id="4932-YMR008C"/>
<dbReference type="PeptideAtlas" id="P39105"/>
<dbReference type="EnsemblFungi" id="YMR008C_mRNA">
    <property type="protein sequence ID" value="YMR008C"/>
    <property type="gene ID" value="YMR008C"/>
</dbReference>
<dbReference type="GeneID" id="855020"/>
<dbReference type="KEGG" id="sce:YMR008C"/>
<dbReference type="AGR" id="SGD:S000004610"/>
<dbReference type="SGD" id="S000004610">
    <property type="gene designation" value="PLB1"/>
</dbReference>
<dbReference type="VEuPathDB" id="FungiDB:YMR008C"/>
<dbReference type="eggNOG" id="KOG1325">
    <property type="taxonomic scope" value="Eukaryota"/>
</dbReference>
<dbReference type="GeneTree" id="ENSGT01030000234606"/>
<dbReference type="HOGENOM" id="CLU_014602_0_0_1"/>
<dbReference type="InParanoid" id="P39105"/>
<dbReference type="OMA" id="FGHINMS"/>
<dbReference type="OrthoDB" id="4084751at2759"/>
<dbReference type="BioCyc" id="MetaCyc:YMR008C-MONOMER"/>
<dbReference type="BioCyc" id="YEAST:YMR008C-MONOMER"/>
<dbReference type="Reactome" id="R-SCE-111995">
    <property type="pathway name" value="phospho-PLA2 pathway"/>
</dbReference>
<dbReference type="Reactome" id="R-SCE-1482788">
    <property type="pathway name" value="Acyl chain remodelling of PC"/>
</dbReference>
<dbReference type="Reactome" id="R-SCE-1482798">
    <property type="pathway name" value="Acyl chain remodeling of CL"/>
</dbReference>
<dbReference type="Reactome" id="R-SCE-1482801">
    <property type="pathway name" value="Acyl chain remodelling of PS"/>
</dbReference>
<dbReference type="Reactome" id="R-SCE-1482839">
    <property type="pathway name" value="Acyl chain remodelling of PE"/>
</dbReference>
<dbReference type="Reactome" id="R-SCE-1482922">
    <property type="pathway name" value="Acyl chain remodelling of PI"/>
</dbReference>
<dbReference type="Reactome" id="R-SCE-1482925">
    <property type="pathway name" value="Acyl chain remodelling of PG"/>
</dbReference>
<dbReference type="Reactome" id="R-SCE-1483115">
    <property type="pathway name" value="Hydrolysis of LPC"/>
</dbReference>
<dbReference type="Reactome" id="R-SCE-1483152">
    <property type="pathway name" value="Hydrolysis of LPE"/>
</dbReference>
<dbReference type="Reactome" id="R-SCE-1483166">
    <property type="pathway name" value="Synthesis of PA"/>
</dbReference>
<dbReference type="Reactome" id="R-SCE-2142753">
    <property type="pathway name" value="Arachidonate metabolism"/>
</dbReference>
<dbReference type="Reactome" id="R-SCE-418592">
    <property type="pathway name" value="ADP signalling through P2Y purinoceptor 1"/>
</dbReference>
<dbReference type="Reactome" id="R-SCE-432142">
    <property type="pathway name" value="Platelet sensitization by LDL"/>
</dbReference>
<dbReference type="Reactome" id="R-SCE-6811436">
    <property type="pathway name" value="COPI-independent Golgi-to-ER retrograde traffic"/>
</dbReference>
<dbReference type="BioGRID-ORCS" id="855020">
    <property type="hits" value="3 hits in 10 CRISPR screens"/>
</dbReference>
<dbReference type="PRO" id="PR:P39105"/>
<dbReference type="Proteomes" id="UP000002311">
    <property type="component" value="Chromosome XIII"/>
</dbReference>
<dbReference type="RNAct" id="P39105">
    <property type="molecule type" value="protein"/>
</dbReference>
<dbReference type="GO" id="GO:0071944">
    <property type="term" value="C:cell periphery"/>
    <property type="evidence" value="ECO:0007005"/>
    <property type="project" value="SGD"/>
</dbReference>
<dbReference type="GO" id="GO:0005829">
    <property type="term" value="C:cytosol"/>
    <property type="evidence" value="ECO:0000318"/>
    <property type="project" value="GO_Central"/>
</dbReference>
<dbReference type="GO" id="GO:0005783">
    <property type="term" value="C:endoplasmic reticulum"/>
    <property type="evidence" value="ECO:0000314"/>
    <property type="project" value="SGD"/>
</dbReference>
<dbReference type="GO" id="GO:0005576">
    <property type="term" value="C:extracellular region"/>
    <property type="evidence" value="ECO:0000318"/>
    <property type="project" value="GO_Central"/>
</dbReference>
<dbReference type="GO" id="GO:0042597">
    <property type="term" value="C:periplasmic space"/>
    <property type="evidence" value="ECO:0000314"/>
    <property type="project" value="SGD"/>
</dbReference>
<dbReference type="GO" id="GO:0005886">
    <property type="term" value="C:plasma membrane"/>
    <property type="evidence" value="ECO:0000314"/>
    <property type="project" value="SGD"/>
</dbReference>
<dbReference type="GO" id="GO:0098552">
    <property type="term" value="C:side of membrane"/>
    <property type="evidence" value="ECO:0007669"/>
    <property type="project" value="UniProtKB-KW"/>
</dbReference>
<dbReference type="GO" id="GO:0004622">
    <property type="term" value="F:lysophospholipase activity"/>
    <property type="evidence" value="ECO:0000315"/>
    <property type="project" value="SGD"/>
</dbReference>
<dbReference type="GO" id="GO:0004623">
    <property type="term" value="F:phospholipase A2 activity"/>
    <property type="evidence" value="ECO:0000318"/>
    <property type="project" value="GO_Central"/>
</dbReference>
<dbReference type="GO" id="GO:0046475">
    <property type="term" value="P:glycerophospholipid catabolic process"/>
    <property type="evidence" value="ECO:0000318"/>
    <property type="project" value="GO_Central"/>
</dbReference>
<dbReference type="GO" id="GO:0006650">
    <property type="term" value="P:glycerophospholipid metabolic process"/>
    <property type="evidence" value="ECO:0000315"/>
    <property type="project" value="SGD"/>
</dbReference>
<dbReference type="GO" id="GO:0036151">
    <property type="term" value="P:phosphatidylcholine acyl-chain remodeling"/>
    <property type="evidence" value="ECO:0000315"/>
    <property type="project" value="SGD"/>
</dbReference>
<dbReference type="CDD" id="cd07203">
    <property type="entry name" value="cPLA2_Fungal_PLB"/>
    <property type="match status" value="1"/>
</dbReference>
<dbReference type="FunFam" id="3.40.1090.10:FF:000010">
    <property type="entry name" value="Lysophospholipase"/>
    <property type="match status" value="1"/>
</dbReference>
<dbReference type="Gene3D" id="3.40.1090.10">
    <property type="entry name" value="Cytosolic phospholipase A2 catalytic domain"/>
    <property type="match status" value="1"/>
</dbReference>
<dbReference type="InterPro" id="IPR016035">
    <property type="entry name" value="Acyl_Trfase/lysoPLipase"/>
</dbReference>
<dbReference type="InterPro" id="IPR002642">
    <property type="entry name" value="LysoPLipase_cat_dom"/>
</dbReference>
<dbReference type="PANTHER" id="PTHR10728">
    <property type="entry name" value="CYTOSOLIC PHOSPHOLIPASE A2"/>
    <property type="match status" value="1"/>
</dbReference>
<dbReference type="PANTHER" id="PTHR10728:SF33">
    <property type="entry name" value="LYSOPHOSPHOLIPASE 1-RELATED"/>
    <property type="match status" value="1"/>
</dbReference>
<dbReference type="Pfam" id="PF01735">
    <property type="entry name" value="PLA2_B"/>
    <property type="match status" value="1"/>
</dbReference>
<dbReference type="SMART" id="SM00022">
    <property type="entry name" value="PLAc"/>
    <property type="match status" value="1"/>
</dbReference>
<dbReference type="SUPFAM" id="SSF52151">
    <property type="entry name" value="FabD/lysophospholipase-like"/>
    <property type="match status" value="1"/>
</dbReference>
<dbReference type="PROSITE" id="PS51210">
    <property type="entry name" value="PLA2C"/>
    <property type="match status" value="1"/>
</dbReference>
<proteinExistence type="evidence at protein level"/>
<reference key="1">
    <citation type="journal article" date="1994" name="J. Biol. Chem.">
        <title>The Saccharomyces cerevisiae PLB1 gene encodes a protein required for lysophospholipase and phospholipase B activity.</title>
        <authorList>
            <person name="Lee K.S."/>
            <person name="Patton J.L."/>
            <person name="Fido M."/>
            <person name="Hines L.K."/>
            <person name="Kohlwein S.D."/>
            <person name="Paltauf F."/>
            <person name="Henry S.A."/>
            <person name="Levin D.E."/>
        </authorList>
    </citation>
    <scope>NUCLEOTIDE SEQUENCE [GENOMIC DNA]</scope>
    <scope>FUNCTION</scope>
    <scope>CATALYTIC ACTIVITY</scope>
    <source>
        <strain>ATCC 204508 / S288c</strain>
    </source>
</reference>
<reference key="2">
    <citation type="journal article" date="1997" name="Nature">
        <title>The nucleotide sequence of Saccharomyces cerevisiae chromosome XIII.</title>
        <authorList>
            <person name="Bowman S."/>
            <person name="Churcher C.M."/>
            <person name="Badcock K."/>
            <person name="Brown D."/>
            <person name="Chillingworth T."/>
            <person name="Connor R."/>
            <person name="Dedman K."/>
            <person name="Devlin K."/>
            <person name="Gentles S."/>
            <person name="Hamlin N."/>
            <person name="Hunt S."/>
            <person name="Jagels K."/>
            <person name="Lye G."/>
            <person name="Moule S."/>
            <person name="Odell C."/>
            <person name="Pearson D."/>
            <person name="Rajandream M.A."/>
            <person name="Rice P."/>
            <person name="Skelton J."/>
            <person name="Walsh S.V."/>
            <person name="Whitehead S."/>
            <person name="Barrell B.G."/>
        </authorList>
    </citation>
    <scope>NUCLEOTIDE SEQUENCE [LARGE SCALE GENOMIC DNA]</scope>
    <source>
        <strain>ATCC 204508 / S288c</strain>
    </source>
</reference>
<reference key="3">
    <citation type="journal article" date="2014" name="G3 (Bethesda)">
        <title>The reference genome sequence of Saccharomyces cerevisiae: Then and now.</title>
        <authorList>
            <person name="Engel S.R."/>
            <person name="Dietrich F.S."/>
            <person name="Fisk D.G."/>
            <person name="Binkley G."/>
            <person name="Balakrishnan R."/>
            <person name="Costanzo M.C."/>
            <person name="Dwight S.S."/>
            <person name="Hitz B.C."/>
            <person name="Karra K."/>
            <person name="Nash R.S."/>
            <person name="Weng S."/>
            <person name="Wong E.D."/>
            <person name="Lloyd P."/>
            <person name="Skrzypek M.S."/>
            <person name="Miyasato S.R."/>
            <person name="Simison M."/>
            <person name="Cherry J.M."/>
        </authorList>
    </citation>
    <scope>GENOME REANNOTATION</scope>
    <source>
        <strain>ATCC 204508 / S288c</strain>
    </source>
</reference>
<reference key="4">
    <citation type="journal article" date="2007" name="Genome Res.">
        <title>Approaching a complete repository of sequence-verified protein-encoding clones for Saccharomyces cerevisiae.</title>
        <authorList>
            <person name="Hu Y."/>
            <person name="Rolfs A."/>
            <person name="Bhullar B."/>
            <person name="Murthy T.V.S."/>
            <person name="Zhu C."/>
            <person name="Berger M.F."/>
            <person name="Camargo A.A."/>
            <person name="Kelley F."/>
            <person name="McCarron S."/>
            <person name="Jepson D."/>
            <person name="Richardson A."/>
            <person name="Raphael J."/>
            <person name="Moreira D."/>
            <person name="Taycher E."/>
            <person name="Zuo D."/>
            <person name="Mohr S."/>
            <person name="Kane M.F."/>
            <person name="Williamson J."/>
            <person name="Simpson A.J.G."/>
            <person name="Bulyk M.L."/>
            <person name="Harlow E."/>
            <person name="Marsischky G."/>
            <person name="Kolodner R.D."/>
            <person name="LaBaer J."/>
        </authorList>
    </citation>
    <scope>NUCLEOTIDE SEQUENCE [GENOMIC DNA]</scope>
    <source>
        <strain>ATCC 204508 / S288c</strain>
    </source>
</reference>
<reference key="5">
    <citation type="journal article" date="1999" name="Biochemistry">
        <title>The PLB2 gene of Saccharomyces cerevisiae confers resistance to lysophosphatidylcholine and encodes a phospholipase B/lysophospholipase.</title>
        <authorList>
            <person name="Fyrst H."/>
            <person name="Oskouian B."/>
            <person name="Kuypers F.A."/>
            <person name="Saba J.D."/>
        </authorList>
    </citation>
    <scope>CATALYTIC ACTIVITY</scope>
</reference>
<reference key="6">
    <citation type="journal article" date="1999" name="J. Bacteriol.">
        <title>Amino acid residues in the omega-minus region participate in cellular localization of yeast glycosylphosphatidylinositol-attached proteins.</title>
        <authorList>
            <person name="Hamada K."/>
            <person name="Terashima H."/>
            <person name="Arisawa M."/>
            <person name="Yabuki N."/>
            <person name="Kitada K."/>
        </authorList>
    </citation>
    <scope>SUBCELLULAR LOCATION</scope>
</reference>
<reference key="7">
    <citation type="journal article" date="1999" name="J. Biol. Chem.">
        <title>Characterization and function in vivo of two novel phospholipases B/lysophospholipases from Saccharomyces cerevisiae.</title>
        <authorList>
            <person name="Merkel O."/>
            <person name="Fido M."/>
            <person name="Mayr J.A."/>
            <person name="Prueger H."/>
            <person name="Raab F."/>
            <person name="Zandonella G."/>
            <person name="Kohlwein S.D."/>
            <person name="Paltauf F."/>
        </authorList>
    </citation>
    <scope>FUNCTION</scope>
    <scope>CATALYTIC ACTIVITY</scope>
    <scope>SUBCELLULAR LOCATION</scope>
</reference>
<reference key="8">
    <citation type="journal article" date="2005" name="Biochem. J.">
        <title>Regulation of activity in vitro and in vivo of three phospholipases B from Saccharomyces cerevisiae.</title>
        <authorList>
            <person name="Merkel O."/>
            <person name="Oskolkova O.V."/>
            <person name="Raab F."/>
            <person name="El-Toukhy R."/>
            <person name="Paltauf F."/>
        </authorList>
    </citation>
    <scope>FUNCTION</scope>
    <scope>CATALYTIC ACTIVITY</scope>
    <scope>SUBSTRATE SPECIFICITY</scope>
</reference>
<name>PLB1_YEAST</name>
<evidence type="ECO:0000255" key="1"/>
<evidence type="ECO:0000255" key="2">
    <source>
        <dbReference type="PROSITE-ProRule" id="PRU00555"/>
    </source>
</evidence>
<evidence type="ECO:0000269" key="3">
    <source>
    </source>
</evidence>
<evidence type="ECO:0000269" key="4">
    <source>
    </source>
</evidence>
<evidence type="ECO:0000269" key="5">
    <source>
    </source>
</evidence>
<evidence type="ECO:0000269" key="6">
    <source>
    </source>
</evidence>
<evidence type="ECO:0000303" key="7">
    <source>
    </source>
</evidence>
<evidence type="ECO:0000305" key="8"/>
<evidence type="ECO:0000305" key="9">
    <source>
    </source>
</evidence>
<evidence type="ECO:0000305" key="10">
    <source>
    </source>
</evidence>
<evidence type="ECO:0000305" key="11">
    <source>
    </source>
</evidence>
<evidence type="ECO:0000305" key="12">
    <source>
    </source>
</evidence>
<evidence type="ECO:0000305" key="13">
    <source>
    </source>
</evidence>
<evidence type="ECO:0000312" key="14">
    <source>
        <dbReference type="SGD" id="S000004610"/>
    </source>
</evidence>